<evidence type="ECO:0000250" key="1"/>
<evidence type="ECO:0000250" key="2">
    <source>
        <dbReference type="UniProtKB" id="Q9BQT8"/>
    </source>
</evidence>
<evidence type="ECO:0000255" key="3"/>
<evidence type="ECO:0000305" key="4"/>
<protein>
    <recommendedName>
        <fullName>Mitochondrial 2-oxodicarboxylate carrier</fullName>
    </recommendedName>
    <alternativeName>
        <fullName>Solute carrier family 25 member 21</fullName>
    </alternativeName>
</protein>
<dbReference type="EMBL" id="CR857243">
    <property type="protein sequence ID" value="CAH89540.1"/>
    <property type="molecule type" value="mRNA"/>
</dbReference>
<dbReference type="RefSeq" id="NP_001124669.1">
    <property type="nucleotide sequence ID" value="NM_001131197.1"/>
</dbReference>
<dbReference type="SMR" id="Q5RFB7"/>
<dbReference type="FunCoup" id="Q5RFB7">
    <property type="interactions" value="443"/>
</dbReference>
<dbReference type="STRING" id="9601.ENSPPYP00000006539"/>
<dbReference type="Ensembl" id="ENSPPYT00000033794.2">
    <property type="protein sequence ID" value="ENSPPYP00000024530.2"/>
    <property type="gene ID" value="ENSPPYG00000005756.3"/>
</dbReference>
<dbReference type="GeneID" id="100171514"/>
<dbReference type="KEGG" id="pon:100171514"/>
<dbReference type="CTD" id="89874"/>
<dbReference type="eggNOG" id="KOG0754">
    <property type="taxonomic scope" value="Eukaryota"/>
</dbReference>
<dbReference type="GeneTree" id="ENSGT00730000111119"/>
<dbReference type="InParanoid" id="Q5RFB7"/>
<dbReference type="OMA" id="LPFQYQF"/>
<dbReference type="OrthoDB" id="434783at2759"/>
<dbReference type="TreeFam" id="TF314035"/>
<dbReference type="Proteomes" id="UP000001595">
    <property type="component" value="Chromosome 14"/>
</dbReference>
<dbReference type="GO" id="GO:0005743">
    <property type="term" value="C:mitochondrial inner membrane"/>
    <property type="evidence" value="ECO:0007669"/>
    <property type="project" value="UniProtKB-SubCell"/>
</dbReference>
<dbReference type="GO" id="GO:0015297">
    <property type="term" value="F:antiporter activity"/>
    <property type="evidence" value="ECO:0007669"/>
    <property type="project" value="UniProtKB-KW"/>
</dbReference>
<dbReference type="GO" id="GO:0006869">
    <property type="term" value="P:lipid transport"/>
    <property type="evidence" value="ECO:0007669"/>
    <property type="project" value="UniProtKB-KW"/>
</dbReference>
<dbReference type="FunFam" id="1.50.40.10:FF:000048">
    <property type="entry name" value="mitochondrial 2-oxodicarboxylate carrier isoform X2"/>
    <property type="match status" value="1"/>
</dbReference>
<dbReference type="FunFam" id="1.50.40.10:FF:000056">
    <property type="entry name" value="mitochondrial 2-oxodicarboxylate carrier isoform X2"/>
    <property type="match status" value="1"/>
</dbReference>
<dbReference type="Gene3D" id="1.50.40.10">
    <property type="entry name" value="Mitochondrial carrier domain"/>
    <property type="match status" value="2"/>
</dbReference>
<dbReference type="InterPro" id="IPR002067">
    <property type="entry name" value="Mit_carrier"/>
</dbReference>
<dbReference type="InterPro" id="IPR051752">
    <property type="entry name" value="Mito_2-oxodicarb_carrier"/>
</dbReference>
<dbReference type="InterPro" id="IPR018108">
    <property type="entry name" value="Mitochondrial_sb/sol_carrier"/>
</dbReference>
<dbReference type="InterPro" id="IPR023395">
    <property type="entry name" value="Mt_carrier_dom_sf"/>
</dbReference>
<dbReference type="PANTHER" id="PTHR46356">
    <property type="entry name" value="MITOCHONDRIAL 2-OXODICARBOXYLATE CARRIER"/>
    <property type="match status" value="1"/>
</dbReference>
<dbReference type="PANTHER" id="PTHR46356:SF1">
    <property type="entry name" value="MITOCHONDRIAL 2-OXODICARBOXYLATE CARRIER"/>
    <property type="match status" value="1"/>
</dbReference>
<dbReference type="Pfam" id="PF00153">
    <property type="entry name" value="Mito_carr"/>
    <property type="match status" value="3"/>
</dbReference>
<dbReference type="PRINTS" id="PR00926">
    <property type="entry name" value="MITOCARRIER"/>
</dbReference>
<dbReference type="SUPFAM" id="SSF103506">
    <property type="entry name" value="Mitochondrial carrier"/>
    <property type="match status" value="1"/>
</dbReference>
<dbReference type="PROSITE" id="PS50920">
    <property type="entry name" value="SOLCAR"/>
    <property type="match status" value="3"/>
</dbReference>
<gene>
    <name type="primary">SLC25A21</name>
    <name type="synonym">ODC</name>
</gene>
<keyword id="KW-0050">Antiport</keyword>
<keyword id="KW-0445">Lipid transport</keyword>
<keyword id="KW-0472">Membrane</keyword>
<keyword id="KW-0496">Mitochondrion</keyword>
<keyword id="KW-0999">Mitochondrion inner membrane</keyword>
<keyword id="KW-1185">Reference proteome</keyword>
<keyword id="KW-0677">Repeat</keyword>
<keyword id="KW-0812">Transmembrane</keyword>
<keyword id="KW-1133">Transmembrane helix</keyword>
<keyword id="KW-0813">Transport</keyword>
<proteinExistence type="evidence at transcript level"/>
<accession>Q5RFB7</accession>
<feature type="chain" id="PRO_0000090646" description="Mitochondrial 2-oxodicarboxylate carrier">
    <location>
        <begin position="1"/>
        <end position="299"/>
    </location>
</feature>
<feature type="transmembrane region" description="Helical; Name=1" evidence="3">
    <location>
        <begin position="17"/>
        <end position="37"/>
    </location>
</feature>
<feature type="transmembrane region" description="Helical; Name=2" evidence="3">
    <location>
        <begin position="70"/>
        <end position="89"/>
    </location>
</feature>
<feature type="transmembrane region" description="Helical; Name=3" evidence="3">
    <location>
        <begin position="113"/>
        <end position="133"/>
    </location>
</feature>
<feature type="transmembrane region" description="Helical; Name=4" evidence="3">
    <location>
        <begin position="167"/>
        <end position="187"/>
    </location>
</feature>
<feature type="transmembrane region" description="Helical; Name=5" evidence="3">
    <location>
        <begin position="205"/>
        <end position="225"/>
    </location>
</feature>
<feature type="transmembrane region" description="Helical; Name=6" evidence="3">
    <location>
        <begin position="277"/>
        <end position="297"/>
    </location>
</feature>
<feature type="repeat" description="Solcar 1">
    <location>
        <begin position="11"/>
        <end position="100"/>
    </location>
</feature>
<feature type="repeat" description="Solcar 2">
    <location>
        <begin position="107"/>
        <end position="196"/>
    </location>
</feature>
<feature type="repeat" description="Solcar 3">
    <location>
        <begin position="205"/>
        <end position="294"/>
    </location>
</feature>
<comment type="function">
    <text evidence="2">Transports dicarboxylates across the inner membranes of mitochondria by a counter-exchange mechanism. Can transport 2-oxoadipate (2-oxohexanedioate), 2-oxoglutarate, adipate (hexanedioate), glutarate, and to a lesser extent, pimelate (heptanedioate), 2-oxopimelate (2-oxoheptanedioate), 2-aminoadipate (2-aminohexanedioate), oxaloacetate, and citrate. Plays a central role in catabolism of lysine, hydroxylysine, and tryptophan, by transporting common metabolite intermediates (such as 2-oxoadipate) into the mitochondria, where it is converted into acetyl-CoA and can enter the citric acid (TCA) cycle.</text>
</comment>
<comment type="catalytic activity">
    <reaction evidence="2">
        <text>2-oxoadipate(in) + 2-oxoglutarate(out) = 2-oxoadipate(out) + 2-oxoglutarate(in)</text>
        <dbReference type="Rhea" id="RHEA:71739"/>
        <dbReference type="ChEBI" id="CHEBI:16810"/>
        <dbReference type="ChEBI" id="CHEBI:57499"/>
    </reaction>
</comment>
<comment type="catalytic activity">
    <reaction evidence="2">
        <text>hexanedioate(in) + 2-oxoglutarate(out) = hexanedioate(out) + 2-oxoglutarate(in)</text>
        <dbReference type="Rhea" id="RHEA:71743"/>
        <dbReference type="ChEBI" id="CHEBI:16810"/>
        <dbReference type="ChEBI" id="CHEBI:17128"/>
    </reaction>
</comment>
<comment type="catalytic activity">
    <reaction evidence="2">
        <text>L-2-aminoadipate(in) + 2-oxoglutarate(out) = L-2-aminoadipate(out) + 2-oxoglutarate(in)</text>
        <dbReference type="Rhea" id="RHEA:71747"/>
        <dbReference type="ChEBI" id="CHEBI:16810"/>
        <dbReference type="ChEBI" id="CHEBI:58672"/>
    </reaction>
</comment>
<comment type="catalytic activity">
    <reaction evidence="2">
        <text>glutarate(in) + 2-oxoglutarate(out) = glutarate(out) + 2-oxoglutarate(in)</text>
        <dbReference type="Rhea" id="RHEA:71751"/>
        <dbReference type="ChEBI" id="CHEBI:16810"/>
        <dbReference type="ChEBI" id="CHEBI:30921"/>
    </reaction>
</comment>
<comment type="catalytic activity">
    <reaction evidence="2">
        <text>2-oxoheptanedioate(in) + 2-oxoglutarate(out) = 2-oxoheptanedioate(out) + 2-oxoglutarate(in)</text>
        <dbReference type="Rhea" id="RHEA:71755"/>
        <dbReference type="ChEBI" id="CHEBI:16810"/>
        <dbReference type="ChEBI" id="CHEBI:72701"/>
    </reaction>
</comment>
<comment type="catalytic activity">
    <reaction evidence="2">
        <text>heptanedioate(in) + 2-oxoglutarate(out) = heptanedioate(out) + 2-oxoglutarate(in)</text>
        <dbReference type="Rhea" id="RHEA:71759"/>
        <dbReference type="ChEBI" id="CHEBI:16810"/>
        <dbReference type="ChEBI" id="CHEBI:36165"/>
    </reaction>
</comment>
<comment type="catalytic activity">
    <reaction evidence="2">
        <text>citrate(in) + 2-oxoglutarate(out) = citrate(out) + 2-oxoglutarate(in)</text>
        <dbReference type="Rhea" id="RHEA:71763"/>
        <dbReference type="ChEBI" id="CHEBI:16810"/>
        <dbReference type="ChEBI" id="CHEBI:16947"/>
    </reaction>
</comment>
<comment type="subcellular location">
    <subcellularLocation>
        <location evidence="1">Mitochondrion inner membrane</location>
        <topology evidence="1">Multi-pass membrane protein</topology>
    </subcellularLocation>
</comment>
<comment type="similarity">
    <text evidence="4">Belongs to the mitochondrial carrier (TC 2.A.29) family.</text>
</comment>
<name>ODC_PONAB</name>
<organism>
    <name type="scientific">Pongo abelii</name>
    <name type="common">Sumatran orangutan</name>
    <name type="synonym">Pongo pygmaeus abelii</name>
    <dbReference type="NCBI Taxonomy" id="9601"/>
    <lineage>
        <taxon>Eukaryota</taxon>
        <taxon>Metazoa</taxon>
        <taxon>Chordata</taxon>
        <taxon>Craniata</taxon>
        <taxon>Vertebrata</taxon>
        <taxon>Euteleostomi</taxon>
        <taxon>Mammalia</taxon>
        <taxon>Eutheria</taxon>
        <taxon>Euarchontoglires</taxon>
        <taxon>Primates</taxon>
        <taxon>Haplorrhini</taxon>
        <taxon>Catarrhini</taxon>
        <taxon>Hominidae</taxon>
        <taxon>Pongo</taxon>
    </lineage>
</organism>
<reference key="1">
    <citation type="submission" date="2004-11" db="EMBL/GenBank/DDBJ databases">
        <authorList>
            <consortium name="The German cDNA consortium"/>
        </authorList>
    </citation>
    <scope>NUCLEOTIDE SEQUENCE [LARGE SCALE MRNA]</scope>
    <source>
        <tissue>Kidney</tissue>
    </source>
</reference>
<sequence>MSAKPEVGLVREASRQIVAGGSAGLVEICLMHPLDVVKTRFQIQRCATDPNSYKSLVDSFRMIFQTERLFGFYKGILPPILAETPKRAVKFFTFEQYKKLLGYVSLSPALTFTIAGLGSGLTEAIVVNPFEVVKVGLQANRNTFAKQPSTVGYARQIIKKEGWGLQGLNKGLTATLGRHGVFNMVYFGFYYNVKNMIPVNKDPTLEFLRKFGIGLLSGTIASVINIPFDVAKSRIQGPQPVPGEIKYRTCFKTMATVYQEEGILALYKGLLPKIMRLGPGGAVMLLVYEYTYSWLQENW</sequence>